<feature type="chain" id="PRO_1000024543" description="ATP-dependent Clp protease ATP-binding subunit ClpX">
    <location>
        <begin position="1"/>
        <end position="424"/>
    </location>
</feature>
<feature type="domain" description="ClpX-type ZB" evidence="2">
    <location>
        <begin position="2"/>
        <end position="56"/>
    </location>
</feature>
<feature type="binding site" evidence="2">
    <location>
        <position position="15"/>
    </location>
    <ligand>
        <name>Zn(2+)</name>
        <dbReference type="ChEBI" id="CHEBI:29105"/>
    </ligand>
</feature>
<feature type="binding site" evidence="2">
    <location>
        <position position="18"/>
    </location>
    <ligand>
        <name>Zn(2+)</name>
        <dbReference type="ChEBI" id="CHEBI:29105"/>
    </ligand>
</feature>
<feature type="binding site" evidence="2">
    <location>
        <position position="37"/>
    </location>
    <ligand>
        <name>Zn(2+)</name>
        <dbReference type="ChEBI" id="CHEBI:29105"/>
    </ligand>
</feature>
<feature type="binding site" evidence="2">
    <location>
        <position position="40"/>
    </location>
    <ligand>
        <name>Zn(2+)</name>
        <dbReference type="ChEBI" id="CHEBI:29105"/>
    </ligand>
</feature>
<feature type="binding site" evidence="1">
    <location>
        <begin position="120"/>
        <end position="127"/>
    </location>
    <ligand>
        <name>ATP</name>
        <dbReference type="ChEBI" id="CHEBI:30616"/>
    </ligand>
</feature>
<name>CLPX_CITK8</name>
<keyword id="KW-0067">ATP-binding</keyword>
<keyword id="KW-0143">Chaperone</keyword>
<keyword id="KW-0479">Metal-binding</keyword>
<keyword id="KW-0547">Nucleotide-binding</keyword>
<keyword id="KW-1185">Reference proteome</keyword>
<keyword id="KW-0862">Zinc</keyword>
<proteinExistence type="inferred from homology"/>
<comment type="function">
    <text evidence="1">ATP-dependent specificity component of the Clp protease. It directs the protease to specific substrates. Can perform chaperone functions in the absence of ClpP.</text>
</comment>
<comment type="subunit">
    <text evidence="1">Component of the ClpX-ClpP complex. Forms a hexameric ring that, in the presence of ATP, binds to fourteen ClpP subunits assembled into a disk-like structure with a central cavity, resembling the structure of eukaryotic proteasomes.</text>
</comment>
<comment type="similarity">
    <text evidence="1">Belongs to the ClpX chaperone family.</text>
</comment>
<evidence type="ECO:0000255" key="1">
    <source>
        <dbReference type="HAMAP-Rule" id="MF_00175"/>
    </source>
</evidence>
<evidence type="ECO:0000255" key="2">
    <source>
        <dbReference type="PROSITE-ProRule" id="PRU01250"/>
    </source>
</evidence>
<sequence>MTDKRKDGSGKLLYCSFCGKSQHEVRKLIAGPSVYICDECVDLCNDIIREEIKEVAPHRERSALPTPHEIRNHLDDYVIGQEQAKKVLAVAVYNHYKRLRNGDTSNGVELGKSNILLIGPTGSGKTLLAETLARLLDVPFTMADATTLTEAGYVGEDVENIIQKLLQKCDYDVQKAQRGIVYIDEIDKISRKSDNPSITRDVSGEGVQQALLKLIEGTVAAVPPQGGRKHPQQEFLQVDTSKILFICGGAFAGLDKVIANRVETGSGIGFGATVKAKSDKASEGELLAQVEPEDLIKFGLIPEFIGRLPVVATLNELSEEALIQILKEPKNALTKQYQALFNLEGVDLEFRDEALDAIAKKAMARKTGARGLRSIVEAALLDTMYDLPSMEDVEKVVIDESVIGGQSKPLLIYGKPEAQQASGE</sequence>
<dbReference type="EMBL" id="CP000822">
    <property type="protein sequence ID" value="ABV13828.1"/>
    <property type="molecule type" value="Genomic_DNA"/>
</dbReference>
<dbReference type="RefSeq" id="WP_012133543.1">
    <property type="nucleotide sequence ID" value="NC_009792.1"/>
</dbReference>
<dbReference type="SMR" id="A8AK15"/>
<dbReference type="STRING" id="290338.CKO_02722"/>
<dbReference type="GeneID" id="45136577"/>
<dbReference type="KEGG" id="cko:CKO_02722"/>
<dbReference type="HOGENOM" id="CLU_014218_8_2_6"/>
<dbReference type="OrthoDB" id="9804062at2"/>
<dbReference type="Proteomes" id="UP000008148">
    <property type="component" value="Chromosome"/>
</dbReference>
<dbReference type="GO" id="GO:0009376">
    <property type="term" value="C:HslUV protease complex"/>
    <property type="evidence" value="ECO:0007669"/>
    <property type="project" value="TreeGrafter"/>
</dbReference>
<dbReference type="GO" id="GO:0005524">
    <property type="term" value="F:ATP binding"/>
    <property type="evidence" value="ECO:0007669"/>
    <property type="project" value="UniProtKB-UniRule"/>
</dbReference>
<dbReference type="GO" id="GO:0016887">
    <property type="term" value="F:ATP hydrolysis activity"/>
    <property type="evidence" value="ECO:0007669"/>
    <property type="project" value="InterPro"/>
</dbReference>
<dbReference type="GO" id="GO:0140662">
    <property type="term" value="F:ATP-dependent protein folding chaperone"/>
    <property type="evidence" value="ECO:0007669"/>
    <property type="project" value="InterPro"/>
</dbReference>
<dbReference type="GO" id="GO:0046983">
    <property type="term" value="F:protein dimerization activity"/>
    <property type="evidence" value="ECO:0007669"/>
    <property type="project" value="InterPro"/>
</dbReference>
<dbReference type="GO" id="GO:0051082">
    <property type="term" value="F:unfolded protein binding"/>
    <property type="evidence" value="ECO:0007669"/>
    <property type="project" value="UniProtKB-UniRule"/>
</dbReference>
<dbReference type="GO" id="GO:0008270">
    <property type="term" value="F:zinc ion binding"/>
    <property type="evidence" value="ECO:0007669"/>
    <property type="project" value="InterPro"/>
</dbReference>
<dbReference type="GO" id="GO:0051301">
    <property type="term" value="P:cell division"/>
    <property type="evidence" value="ECO:0007669"/>
    <property type="project" value="TreeGrafter"/>
</dbReference>
<dbReference type="GO" id="GO:0051603">
    <property type="term" value="P:proteolysis involved in protein catabolic process"/>
    <property type="evidence" value="ECO:0007669"/>
    <property type="project" value="TreeGrafter"/>
</dbReference>
<dbReference type="CDD" id="cd19497">
    <property type="entry name" value="RecA-like_ClpX"/>
    <property type="match status" value="1"/>
</dbReference>
<dbReference type="FunFam" id="1.10.8.60:FF:000002">
    <property type="entry name" value="ATP-dependent Clp protease ATP-binding subunit ClpX"/>
    <property type="match status" value="1"/>
</dbReference>
<dbReference type="FunFam" id="3.40.50.300:FF:000005">
    <property type="entry name" value="ATP-dependent Clp protease ATP-binding subunit ClpX"/>
    <property type="match status" value="1"/>
</dbReference>
<dbReference type="Gene3D" id="1.10.8.60">
    <property type="match status" value="1"/>
</dbReference>
<dbReference type="Gene3D" id="6.20.220.10">
    <property type="entry name" value="ClpX chaperone, C4-type zinc finger domain"/>
    <property type="match status" value="1"/>
</dbReference>
<dbReference type="Gene3D" id="3.40.50.300">
    <property type="entry name" value="P-loop containing nucleotide triphosphate hydrolases"/>
    <property type="match status" value="1"/>
</dbReference>
<dbReference type="HAMAP" id="MF_00175">
    <property type="entry name" value="ClpX"/>
    <property type="match status" value="1"/>
</dbReference>
<dbReference type="InterPro" id="IPR003593">
    <property type="entry name" value="AAA+_ATPase"/>
</dbReference>
<dbReference type="InterPro" id="IPR050052">
    <property type="entry name" value="ATP-dep_Clp_protease_ClpX"/>
</dbReference>
<dbReference type="InterPro" id="IPR003959">
    <property type="entry name" value="ATPase_AAA_core"/>
</dbReference>
<dbReference type="InterPro" id="IPR019489">
    <property type="entry name" value="Clp_ATPase_C"/>
</dbReference>
<dbReference type="InterPro" id="IPR004487">
    <property type="entry name" value="Clp_protease_ATP-bd_su_ClpX"/>
</dbReference>
<dbReference type="InterPro" id="IPR046425">
    <property type="entry name" value="ClpX_bact"/>
</dbReference>
<dbReference type="InterPro" id="IPR027417">
    <property type="entry name" value="P-loop_NTPase"/>
</dbReference>
<dbReference type="InterPro" id="IPR010603">
    <property type="entry name" value="Znf_CppX_C4"/>
</dbReference>
<dbReference type="InterPro" id="IPR038366">
    <property type="entry name" value="Znf_CppX_C4_sf"/>
</dbReference>
<dbReference type="NCBIfam" id="TIGR00382">
    <property type="entry name" value="clpX"/>
    <property type="match status" value="1"/>
</dbReference>
<dbReference type="NCBIfam" id="NF003745">
    <property type="entry name" value="PRK05342.1"/>
    <property type="match status" value="1"/>
</dbReference>
<dbReference type="PANTHER" id="PTHR48102:SF7">
    <property type="entry name" value="ATP-DEPENDENT CLP PROTEASE ATP-BINDING SUBUNIT CLPX-LIKE, MITOCHONDRIAL"/>
    <property type="match status" value="1"/>
</dbReference>
<dbReference type="PANTHER" id="PTHR48102">
    <property type="entry name" value="ATP-DEPENDENT CLP PROTEASE ATP-BINDING SUBUNIT CLPX-LIKE, MITOCHONDRIAL-RELATED"/>
    <property type="match status" value="1"/>
</dbReference>
<dbReference type="Pfam" id="PF07724">
    <property type="entry name" value="AAA_2"/>
    <property type="match status" value="1"/>
</dbReference>
<dbReference type="Pfam" id="PF10431">
    <property type="entry name" value="ClpB_D2-small"/>
    <property type="match status" value="1"/>
</dbReference>
<dbReference type="Pfam" id="PF06689">
    <property type="entry name" value="zf-C4_ClpX"/>
    <property type="match status" value="1"/>
</dbReference>
<dbReference type="SMART" id="SM00382">
    <property type="entry name" value="AAA"/>
    <property type="match status" value="1"/>
</dbReference>
<dbReference type="SMART" id="SM01086">
    <property type="entry name" value="ClpB_D2-small"/>
    <property type="match status" value="1"/>
</dbReference>
<dbReference type="SMART" id="SM00994">
    <property type="entry name" value="zf-C4_ClpX"/>
    <property type="match status" value="1"/>
</dbReference>
<dbReference type="SUPFAM" id="SSF57716">
    <property type="entry name" value="Glucocorticoid receptor-like (DNA-binding domain)"/>
    <property type="match status" value="1"/>
</dbReference>
<dbReference type="SUPFAM" id="SSF52540">
    <property type="entry name" value="P-loop containing nucleoside triphosphate hydrolases"/>
    <property type="match status" value="1"/>
</dbReference>
<dbReference type="PROSITE" id="PS51902">
    <property type="entry name" value="CLPX_ZB"/>
    <property type="match status" value="1"/>
</dbReference>
<protein>
    <recommendedName>
        <fullName evidence="1">ATP-dependent Clp protease ATP-binding subunit ClpX</fullName>
    </recommendedName>
</protein>
<organism>
    <name type="scientific">Citrobacter koseri (strain ATCC BAA-895 / CDC 4225-83 / SGSC4696)</name>
    <dbReference type="NCBI Taxonomy" id="290338"/>
    <lineage>
        <taxon>Bacteria</taxon>
        <taxon>Pseudomonadati</taxon>
        <taxon>Pseudomonadota</taxon>
        <taxon>Gammaproteobacteria</taxon>
        <taxon>Enterobacterales</taxon>
        <taxon>Enterobacteriaceae</taxon>
        <taxon>Citrobacter</taxon>
    </lineage>
</organism>
<accession>A8AK15</accession>
<reference key="1">
    <citation type="submission" date="2007-08" db="EMBL/GenBank/DDBJ databases">
        <authorList>
            <consortium name="The Citrobacter koseri Genome Sequencing Project"/>
            <person name="McClelland M."/>
            <person name="Sanderson E.K."/>
            <person name="Porwollik S."/>
            <person name="Spieth J."/>
            <person name="Clifton W.S."/>
            <person name="Latreille P."/>
            <person name="Courtney L."/>
            <person name="Wang C."/>
            <person name="Pepin K."/>
            <person name="Bhonagiri V."/>
            <person name="Nash W."/>
            <person name="Johnson M."/>
            <person name="Thiruvilangam P."/>
            <person name="Wilson R."/>
        </authorList>
    </citation>
    <scope>NUCLEOTIDE SEQUENCE [LARGE SCALE GENOMIC DNA]</scope>
    <source>
        <strain>ATCC BAA-895 / CDC 4225-83 / SGSC4696</strain>
    </source>
</reference>
<gene>
    <name evidence="1" type="primary">clpX</name>
    <name type="ordered locus">CKO_02722</name>
</gene>